<sequence>MALKFNPLVSQPYKLASSARPPVSTFRSPKFLCLASSSSPALSSKEVESLKKPFTPPREVHLQVLHSMPPQKIEIFKSMEDRAEQNLLPHLKDVEKSWQPQDFLPDPASDGFEDQVKELRERARELPDDYFVVLVGDMITEEALPTYQTMLNTLDGVRDETGASPTSWAVWTRAWTAEENRHGDLLNKYLYLSGRVDMRQIEKTIQYLIGSGMDPRTENNPYLGFIYTSFQERATFVSHGNTARQAKEHGDLKLAQICGTIAADEKRHETAYTKIVEKLLEIDPDGTVVAFADMMRKKISMPAHLMYDGRDDNLFDNFSSVAQRLGVYTAKDYADILEFLAGRWRIESLTGLSGEGNKAQEYLCGLTPRIRRLDERAQARAKKGPKIPFSWIHDREVQL</sequence>
<comment type="function">
    <text>Converts stearoyl-ACP to oleoyl-ACP by introduction of a cis double bond between carbons Delta(9) and Delta(10) of the acyl chain.</text>
</comment>
<comment type="catalytic activity">
    <reaction evidence="2">
        <text>octadecanoyl-[ACP] + 2 reduced [2Fe-2S]-[ferredoxin] + O2 + 2 H(+) = (9Z)-octadecenoyl-[ACP] + 2 oxidized [2Fe-2S]-[ferredoxin] + 2 H2O</text>
        <dbReference type="Rhea" id="RHEA:11776"/>
        <dbReference type="Rhea" id="RHEA-COMP:9656"/>
        <dbReference type="Rhea" id="RHEA-COMP:9924"/>
        <dbReference type="Rhea" id="RHEA-COMP:10000"/>
        <dbReference type="Rhea" id="RHEA-COMP:10001"/>
        <dbReference type="ChEBI" id="CHEBI:15377"/>
        <dbReference type="ChEBI" id="CHEBI:15378"/>
        <dbReference type="ChEBI" id="CHEBI:15379"/>
        <dbReference type="ChEBI" id="CHEBI:33737"/>
        <dbReference type="ChEBI" id="CHEBI:33738"/>
        <dbReference type="ChEBI" id="CHEBI:78495"/>
        <dbReference type="ChEBI" id="CHEBI:78783"/>
        <dbReference type="EC" id="1.14.19.2"/>
    </reaction>
</comment>
<comment type="cofactor">
    <cofactor evidence="2">
        <name>Fe(2+)</name>
        <dbReference type="ChEBI" id="CHEBI:29033"/>
    </cofactor>
    <text evidence="2">Binds 2 Fe(2+) ions per subunit.</text>
</comment>
<comment type="pathway">
    <text>Lipid metabolism; fatty acid metabolism.</text>
</comment>
<comment type="subunit">
    <text evidence="2">Homodimer.</text>
</comment>
<comment type="subcellular location">
    <subcellularLocation>
        <location evidence="3">Plastid</location>
        <location evidence="3">Chloroplast</location>
    </subcellularLocation>
</comment>
<comment type="tissue specificity">
    <text>Developing seeds.</text>
</comment>
<comment type="developmental stage">
    <text>Induced by 25 days after anthesis (dAA), peaking at 45 dAA but decreasing considerably thereafter.</text>
</comment>
<comment type="similarity">
    <text evidence="3">Belongs to the fatty acid desaturase type 2 family.</text>
</comment>
<feature type="transit peptide" description="Chloroplast" evidence="1">
    <location>
        <begin position="1"/>
        <end position="34"/>
    </location>
</feature>
<feature type="chain" id="PRO_0000007128" description="Stearoyl-[acyl-carrier-protein] 9-desaturase, seed specific, chloroplastic">
    <location>
        <begin position="35"/>
        <end position="399"/>
    </location>
</feature>
<feature type="binding site" evidence="2">
    <location>
        <position position="141"/>
    </location>
    <ligand>
        <name>Fe cation</name>
        <dbReference type="ChEBI" id="CHEBI:24875"/>
        <label>1</label>
    </ligand>
</feature>
<feature type="binding site" evidence="2">
    <location>
        <position position="179"/>
    </location>
    <ligand>
        <name>Fe cation</name>
        <dbReference type="ChEBI" id="CHEBI:24875"/>
        <label>1</label>
    </ligand>
</feature>
<feature type="binding site" evidence="2">
    <location>
        <position position="179"/>
    </location>
    <ligand>
        <name>Fe cation</name>
        <dbReference type="ChEBI" id="CHEBI:24875"/>
        <label>2</label>
    </ligand>
</feature>
<feature type="binding site" evidence="2">
    <location>
        <position position="182"/>
    </location>
    <ligand>
        <name>Fe cation</name>
        <dbReference type="ChEBI" id="CHEBI:24875"/>
        <label>1</label>
    </ligand>
</feature>
<feature type="binding site" evidence="2">
    <location>
        <position position="232"/>
    </location>
    <ligand>
        <name>Fe cation</name>
        <dbReference type="ChEBI" id="CHEBI:24875"/>
        <label>2</label>
    </ligand>
</feature>
<feature type="binding site" evidence="2">
    <location>
        <position position="265"/>
    </location>
    <ligand>
        <name>Fe cation</name>
        <dbReference type="ChEBI" id="CHEBI:24875"/>
        <label>1</label>
    </ligand>
</feature>
<feature type="binding site" evidence="2">
    <location>
        <position position="265"/>
    </location>
    <ligand>
        <name>Fe cation</name>
        <dbReference type="ChEBI" id="CHEBI:24875"/>
        <label>2</label>
    </ligand>
</feature>
<feature type="binding site" evidence="2">
    <location>
        <position position="268"/>
    </location>
    <ligand>
        <name>Fe cation</name>
        <dbReference type="ChEBI" id="CHEBI:24875"/>
        <label>2</label>
    </ligand>
</feature>
<name>STADS_BRANA</name>
<organism>
    <name type="scientific">Brassica napus</name>
    <name type="common">Rape</name>
    <dbReference type="NCBI Taxonomy" id="3708"/>
    <lineage>
        <taxon>Eukaryota</taxon>
        <taxon>Viridiplantae</taxon>
        <taxon>Streptophyta</taxon>
        <taxon>Embryophyta</taxon>
        <taxon>Tracheophyta</taxon>
        <taxon>Spermatophyta</taxon>
        <taxon>Magnoliopsida</taxon>
        <taxon>eudicotyledons</taxon>
        <taxon>Gunneridae</taxon>
        <taxon>Pentapetalae</taxon>
        <taxon>rosids</taxon>
        <taxon>malvids</taxon>
        <taxon>Brassicales</taxon>
        <taxon>Brassicaceae</taxon>
        <taxon>Brassiceae</taxon>
        <taxon>Brassica</taxon>
    </lineage>
</organism>
<reference key="1">
    <citation type="journal article" date="1992" name="Plant Mol. Biol.">
        <title>Nucleotide sequence and temporal regulation of a seed-specific Brassica napus cDNA encoding a stearoyl-acyl carrier protein (ACP) desaturase.</title>
        <authorList>
            <person name="Slocombe S.P."/>
            <person name="Cummins I."/>
            <person name="Jarvis R.P."/>
            <person name="Murphy D.J."/>
        </authorList>
    </citation>
    <scope>NUCLEOTIDE SEQUENCE [MRNA]</scope>
    <source>
        <strain>cv. Jet neuf</strain>
        <tissue>Embryo</tissue>
    </source>
</reference>
<dbReference type="EC" id="1.14.19.2"/>
<dbReference type="EMBL" id="X63364">
    <property type="protein sequence ID" value="CAA44964.1"/>
    <property type="molecule type" value="mRNA"/>
</dbReference>
<dbReference type="PIR" id="S24995">
    <property type="entry name" value="S24995"/>
</dbReference>
<dbReference type="SMR" id="Q01771"/>
<dbReference type="UniPathway" id="UPA00199"/>
<dbReference type="GO" id="GO:0009507">
    <property type="term" value="C:chloroplast"/>
    <property type="evidence" value="ECO:0007669"/>
    <property type="project" value="UniProtKB-SubCell"/>
</dbReference>
<dbReference type="GO" id="GO:0046872">
    <property type="term" value="F:metal ion binding"/>
    <property type="evidence" value="ECO:0007669"/>
    <property type="project" value="UniProtKB-KW"/>
</dbReference>
<dbReference type="GO" id="GO:0045300">
    <property type="term" value="F:stearoyl-[ACP] desaturase activity"/>
    <property type="evidence" value="ECO:0007669"/>
    <property type="project" value="UniProtKB-EC"/>
</dbReference>
<dbReference type="GO" id="GO:0006633">
    <property type="term" value="P:fatty acid biosynthetic process"/>
    <property type="evidence" value="ECO:0007669"/>
    <property type="project" value="UniProtKB-KW"/>
</dbReference>
<dbReference type="CDD" id="cd01050">
    <property type="entry name" value="Acyl_ACP_Desat"/>
    <property type="match status" value="1"/>
</dbReference>
<dbReference type="FunFam" id="1.10.620.20:FF:000002">
    <property type="entry name" value="Stearoyl-[acyl-carrier-protein] 9-desaturase, chloroplastic"/>
    <property type="match status" value="1"/>
</dbReference>
<dbReference type="Gene3D" id="1.10.620.20">
    <property type="entry name" value="Ribonucleotide Reductase, subunit A"/>
    <property type="match status" value="1"/>
</dbReference>
<dbReference type="InterPro" id="IPR005803">
    <property type="entry name" value="FADS-2_CS"/>
</dbReference>
<dbReference type="InterPro" id="IPR005067">
    <property type="entry name" value="Fatty_acid_desaturase-2"/>
</dbReference>
<dbReference type="InterPro" id="IPR009078">
    <property type="entry name" value="Ferritin-like_SF"/>
</dbReference>
<dbReference type="InterPro" id="IPR012348">
    <property type="entry name" value="RNR-like"/>
</dbReference>
<dbReference type="PANTHER" id="PTHR31155">
    <property type="entry name" value="ACYL- ACYL-CARRIER-PROTEIN DESATURASE-RELATED"/>
    <property type="match status" value="1"/>
</dbReference>
<dbReference type="PANTHER" id="PTHR31155:SF37">
    <property type="entry name" value="ACYL-[ACYL-CARRIER-PROTEIN] DESATURASE"/>
    <property type="match status" value="1"/>
</dbReference>
<dbReference type="Pfam" id="PF03405">
    <property type="entry name" value="FA_desaturase_2"/>
    <property type="match status" value="1"/>
</dbReference>
<dbReference type="PIRSF" id="PIRSF000346">
    <property type="entry name" value="Dlt9_acylACP_des"/>
    <property type="match status" value="1"/>
</dbReference>
<dbReference type="SUPFAM" id="SSF47240">
    <property type="entry name" value="Ferritin-like"/>
    <property type="match status" value="1"/>
</dbReference>
<dbReference type="PROSITE" id="PS00574">
    <property type="entry name" value="FATTY_ACID_DESATUR_2"/>
    <property type="match status" value="1"/>
</dbReference>
<accession>Q01771</accession>
<proteinExistence type="evidence at transcript level"/>
<keyword id="KW-0150">Chloroplast</keyword>
<keyword id="KW-0275">Fatty acid biosynthesis</keyword>
<keyword id="KW-0276">Fatty acid metabolism</keyword>
<keyword id="KW-0408">Iron</keyword>
<keyword id="KW-0444">Lipid biosynthesis</keyword>
<keyword id="KW-0443">Lipid metabolism</keyword>
<keyword id="KW-0479">Metal-binding</keyword>
<keyword id="KW-0560">Oxidoreductase</keyword>
<keyword id="KW-0934">Plastid</keyword>
<keyword id="KW-0809">Transit peptide</keyword>
<protein>
    <recommendedName>
        <fullName>Stearoyl-[acyl-carrier-protein] 9-desaturase, seed specific, chloroplastic</fullName>
        <shortName>Stearoyl-ACP desaturase</shortName>
        <ecNumber>1.14.19.2</ecNumber>
    </recommendedName>
    <alternativeName>
        <fullName>Acyl-[acyl-carrier-protein] desaturase</fullName>
    </alternativeName>
</protein>
<evidence type="ECO:0000250" key="1">
    <source>
        <dbReference type="UniProtKB" id="P22243"/>
    </source>
</evidence>
<evidence type="ECO:0000250" key="2">
    <source>
        <dbReference type="UniProtKB" id="P22337"/>
    </source>
</evidence>
<evidence type="ECO:0000305" key="3"/>